<organism>
    <name type="scientific">Rattus norvegicus</name>
    <name type="common">Rat</name>
    <dbReference type="NCBI Taxonomy" id="10116"/>
    <lineage>
        <taxon>Eukaryota</taxon>
        <taxon>Metazoa</taxon>
        <taxon>Chordata</taxon>
        <taxon>Craniata</taxon>
        <taxon>Vertebrata</taxon>
        <taxon>Euteleostomi</taxon>
        <taxon>Mammalia</taxon>
        <taxon>Eutheria</taxon>
        <taxon>Euarchontoglires</taxon>
        <taxon>Glires</taxon>
        <taxon>Rodentia</taxon>
        <taxon>Myomorpha</taxon>
        <taxon>Muroidea</taxon>
        <taxon>Muridae</taxon>
        <taxon>Murinae</taxon>
        <taxon>Rattus</taxon>
    </lineage>
</organism>
<protein>
    <recommendedName>
        <fullName evidence="3">Large ribosomal subunit protein eL31</fullName>
    </recommendedName>
    <alternativeName>
        <fullName>60S ribosomal protein L31</fullName>
    </alternativeName>
</protein>
<gene>
    <name type="primary">Rpl31</name>
</gene>
<accession>P62902</accession>
<accession>P12947</accession>
<evidence type="ECO:0000250" key="1">
    <source>
        <dbReference type="UniProtKB" id="P62899"/>
    </source>
</evidence>
<evidence type="ECO:0000250" key="2">
    <source>
        <dbReference type="UniProtKB" id="P62900"/>
    </source>
</evidence>
<evidence type="ECO:0000305" key="3"/>
<feature type="chain" id="PRO_0000153766" description="Large ribosomal subunit protein eL31">
    <location>
        <begin position="1"/>
        <end position="125"/>
    </location>
</feature>
<feature type="modified residue" description="N-acetylmethionine" evidence="1">
    <location>
        <position position="1"/>
    </location>
</feature>
<feature type="modified residue" description="Phosphoserine" evidence="2">
    <location>
        <position position="15"/>
    </location>
</feature>
<feature type="modified residue" description="N6-succinyllysine" evidence="2">
    <location>
        <position position="55"/>
    </location>
</feature>
<feature type="modified residue" description="N6-succinyllysine" evidence="2">
    <location>
        <position position="70"/>
    </location>
</feature>
<feature type="modified residue" description="N6-acetyllysine; alternate" evidence="1">
    <location>
        <position position="75"/>
    </location>
</feature>
<feature type="modified residue" description="N6-succinyllysine; alternate" evidence="2">
    <location>
        <position position="75"/>
    </location>
</feature>
<feature type="modified residue" description="Phosphoserine" evidence="1">
    <location>
        <position position="98"/>
    </location>
</feature>
<keyword id="KW-0007">Acetylation</keyword>
<keyword id="KW-0963">Cytoplasm</keyword>
<keyword id="KW-0597">Phosphoprotein</keyword>
<keyword id="KW-1185">Reference proteome</keyword>
<keyword id="KW-0687">Ribonucleoprotein</keyword>
<keyword id="KW-0689">Ribosomal protein</keyword>
<name>RL31_RAT</name>
<comment type="function">
    <text evidence="1">Component of the large ribosomal subunit. The ribosome is a large ribonucleoprotein complex responsible for the synthesis of proteins in the cell.</text>
</comment>
<comment type="subunit">
    <text evidence="1">Component of the large ribosomal subunit.</text>
</comment>
<comment type="subcellular location">
    <subcellularLocation>
        <location evidence="1">Cytoplasm</location>
    </subcellularLocation>
</comment>
<comment type="similarity">
    <text evidence="3">Belongs to the eukaryotic ribosomal protein eL31 family.</text>
</comment>
<proteinExistence type="evidence at transcript level"/>
<sequence>MAPAKKGGEKKKGRSAINEVVTREYTINIHKRIHGVGFKKRAPRALKEIRKFAMKEMGTPDVRIDTRLNKAVWAKGIRNVPYRIRVRLSRKRNEDEDSPNKLYTLVTYVPVTTFKNLQTVNVDEN</sequence>
<dbReference type="EMBL" id="X04809">
    <property type="protein sequence ID" value="CAA28500.1"/>
    <property type="molecule type" value="mRNA"/>
</dbReference>
<dbReference type="EMBL" id="BC062228">
    <property type="protein sequence ID" value="AAH62228.1"/>
    <property type="molecule type" value="mRNA"/>
</dbReference>
<dbReference type="PIR" id="A26417">
    <property type="entry name" value="R5RT31"/>
</dbReference>
<dbReference type="RefSeq" id="NP_071951.1">
    <property type="nucleotide sequence ID" value="NM_022506.4"/>
</dbReference>
<dbReference type="SMR" id="P62902"/>
<dbReference type="BioGRID" id="249014">
    <property type="interactions" value="3"/>
</dbReference>
<dbReference type="FunCoup" id="P62902">
    <property type="interactions" value="2429"/>
</dbReference>
<dbReference type="IntAct" id="P62902">
    <property type="interactions" value="8"/>
</dbReference>
<dbReference type="STRING" id="10116.ENSRNOP00000031078"/>
<dbReference type="iPTMnet" id="P62902"/>
<dbReference type="PhosphoSitePlus" id="P62902"/>
<dbReference type="jPOST" id="P62902"/>
<dbReference type="PaxDb" id="10116-ENSRNOP00000031078"/>
<dbReference type="Ensembl" id="ENSRNOT00000033733.6">
    <property type="protein sequence ID" value="ENSRNOP00000031078.3"/>
    <property type="gene ID" value="ENSRNOG00000013508.8"/>
</dbReference>
<dbReference type="GeneID" id="64298"/>
<dbReference type="KEGG" id="rno:64298"/>
<dbReference type="UCSC" id="RGD:621202">
    <property type="organism name" value="rat"/>
</dbReference>
<dbReference type="AGR" id="RGD:621202"/>
<dbReference type="CTD" id="6160"/>
<dbReference type="RGD" id="621202">
    <property type="gene designation" value="Rpl31"/>
</dbReference>
<dbReference type="eggNOG" id="KOG0893">
    <property type="taxonomic scope" value="Eukaryota"/>
</dbReference>
<dbReference type="GeneTree" id="ENSGT00950000183030"/>
<dbReference type="HOGENOM" id="CLU_112570_1_1_1"/>
<dbReference type="InParanoid" id="P62902"/>
<dbReference type="OrthoDB" id="9612962at2759"/>
<dbReference type="PhylomeDB" id="P62902"/>
<dbReference type="TreeFam" id="TF314858"/>
<dbReference type="Reactome" id="R-RNO-156827">
    <property type="pathway name" value="L13a-mediated translational silencing of Ceruloplasmin expression"/>
</dbReference>
<dbReference type="Reactome" id="R-RNO-1799339">
    <property type="pathway name" value="SRP-dependent cotranslational protein targeting to membrane"/>
</dbReference>
<dbReference type="Reactome" id="R-RNO-6791226">
    <property type="pathway name" value="Major pathway of rRNA processing in the nucleolus and cytosol"/>
</dbReference>
<dbReference type="Reactome" id="R-RNO-72689">
    <property type="pathway name" value="Formation of a pool of free 40S subunits"/>
</dbReference>
<dbReference type="Reactome" id="R-RNO-72706">
    <property type="pathway name" value="GTP hydrolysis and joining of the 60S ribosomal subunit"/>
</dbReference>
<dbReference type="Reactome" id="R-RNO-975956">
    <property type="pathway name" value="Nonsense Mediated Decay (NMD) independent of the Exon Junction Complex (EJC)"/>
</dbReference>
<dbReference type="Reactome" id="R-RNO-975957">
    <property type="pathway name" value="Nonsense Mediated Decay (NMD) enhanced by the Exon Junction Complex (EJC)"/>
</dbReference>
<dbReference type="PRO" id="PR:P62902"/>
<dbReference type="Proteomes" id="UP000002494">
    <property type="component" value="Chromosome 9"/>
</dbReference>
<dbReference type="Bgee" id="ENSRNOG00000013508">
    <property type="expression patterns" value="Expressed in spleen and 19 other cell types or tissues"/>
</dbReference>
<dbReference type="GO" id="GO:0005737">
    <property type="term" value="C:cytoplasm"/>
    <property type="evidence" value="ECO:0000266"/>
    <property type="project" value="RGD"/>
</dbReference>
<dbReference type="GO" id="GO:0098556">
    <property type="term" value="C:cytoplasmic side of rough endoplasmic reticulum membrane"/>
    <property type="evidence" value="ECO:0000266"/>
    <property type="project" value="RGD"/>
</dbReference>
<dbReference type="GO" id="GO:0022625">
    <property type="term" value="C:cytosolic large ribosomal subunit"/>
    <property type="evidence" value="ECO:0000314"/>
    <property type="project" value="RGD"/>
</dbReference>
<dbReference type="GO" id="GO:0022626">
    <property type="term" value="C:cytosolic ribosome"/>
    <property type="evidence" value="ECO:0000266"/>
    <property type="project" value="RGD"/>
</dbReference>
<dbReference type="GO" id="GO:0015934">
    <property type="term" value="C:large ribosomal subunit"/>
    <property type="evidence" value="ECO:0000266"/>
    <property type="project" value="RGD"/>
</dbReference>
<dbReference type="GO" id="GO:0005654">
    <property type="term" value="C:nucleoplasm"/>
    <property type="evidence" value="ECO:0000314"/>
    <property type="project" value="RGD"/>
</dbReference>
<dbReference type="GO" id="GO:0045202">
    <property type="term" value="C:synapse"/>
    <property type="evidence" value="ECO:0000266"/>
    <property type="project" value="RGD"/>
</dbReference>
<dbReference type="GO" id="GO:0003735">
    <property type="term" value="F:structural constituent of ribosome"/>
    <property type="evidence" value="ECO:0000266"/>
    <property type="project" value="RGD"/>
</dbReference>
<dbReference type="GO" id="GO:0002181">
    <property type="term" value="P:cytoplasmic translation"/>
    <property type="evidence" value="ECO:0000266"/>
    <property type="project" value="RGD"/>
</dbReference>
<dbReference type="CDD" id="cd00463">
    <property type="entry name" value="Ribosomal_L31e"/>
    <property type="match status" value="1"/>
</dbReference>
<dbReference type="FunFam" id="3.10.440.10:FF:000001">
    <property type="entry name" value="60S ribosomal protein L31"/>
    <property type="match status" value="1"/>
</dbReference>
<dbReference type="Gene3D" id="3.10.440.10">
    <property type="match status" value="1"/>
</dbReference>
<dbReference type="InterPro" id="IPR000054">
    <property type="entry name" value="Ribosomal_eL31"/>
</dbReference>
<dbReference type="InterPro" id="IPR020052">
    <property type="entry name" value="Ribosomal_eL31_CS"/>
</dbReference>
<dbReference type="InterPro" id="IPR023621">
    <property type="entry name" value="Ribosomal_eL31_dom_sf"/>
</dbReference>
<dbReference type="PANTHER" id="PTHR10956">
    <property type="entry name" value="60S RIBOSOMAL PROTEIN L31"/>
    <property type="match status" value="1"/>
</dbReference>
<dbReference type="PANTHER" id="PTHR10956:SF0">
    <property type="entry name" value="60S RIBOSOMAL PROTEIN L31"/>
    <property type="match status" value="1"/>
</dbReference>
<dbReference type="Pfam" id="PF01198">
    <property type="entry name" value="Ribosomal_L31e"/>
    <property type="match status" value="1"/>
</dbReference>
<dbReference type="SMART" id="SM01380">
    <property type="entry name" value="Ribosomal_L31e"/>
    <property type="match status" value="1"/>
</dbReference>
<dbReference type="SUPFAM" id="SSF54575">
    <property type="entry name" value="Ribosomal protein L31e"/>
    <property type="match status" value="1"/>
</dbReference>
<dbReference type="PROSITE" id="PS01144">
    <property type="entry name" value="RIBOSOMAL_L31E"/>
    <property type="match status" value="1"/>
</dbReference>
<reference key="1">
    <citation type="journal article" date="1987" name="Eur. J. Biochem.">
        <title>Nucleotide sequence of cloned cDNA specific for rat ribosomal protein L31.</title>
        <authorList>
            <person name="Tanaka T."/>
            <person name="Kuwano Y."/>
            <person name="Kuzumaki T."/>
            <person name="Ishikawa K."/>
            <person name="Ogata K."/>
        </authorList>
    </citation>
    <scope>NUCLEOTIDE SEQUENCE [MRNA]</scope>
    <source>
        <strain>Wistar</strain>
    </source>
</reference>
<reference key="2">
    <citation type="journal article" date="2004" name="Genome Res.">
        <title>The status, quality, and expansion of the NIH full-length cDNA project: the Mammalian Gene Collection (MGC).</title>
        <authorList>
            <consortium name="The MGC Project Team"/>
        </authorList>
    </citation>
    <scope>NUCLEOTIDE SEQUENCE [LARGE SCALE MRNA]</scope>
    <source>
        <tissue>Pituitary</tissue>
    </source>
</reference>